<keyword id="KW-1185">Reference proteome</keyword>
<keyword id="KW-0687">Ribonucleoprotein</keyword>
<keyword id="KW-0689">Ribosomal protein</keyword>
<keyword id="KW-0694">RNA-binding</keyword>
<keyword id="KW-0699">rRNA-binding</keyword>
<evidence type="ECO:0000255" key="1">
    <source>
        <dbReference type="HAMAP-Rule" id="MF_01363"/>
    </source>
</evidence>
<evidence type="ECO:0000305" key="2"/>
<gene>
    <name evidence="1" type="primary">rplU</name>
    <name type="ordered locus">RP751</name>
</gene>
<feature type="chain" id="PRO_0000181011" description="Large ribosomal subunit protein bL21">
    <location>
        <begin position="1"/>
        <end position="105"/>
    </location>
</feature>
<accession>Q9ZCI9</accession>
<sequence length="105" mass="11976">MFAVIKAGGKQYKVDRNSVIKVEKIDGELGSKIQFDQILMIGEYSKPSFIGTPIVKGAIVTAEITNQLKDNKIIAFKKKRRKNYRRKAGHRQELTELKILDITKQ</sequence>
<protein>
    <recommendedName>
        <fullName evidence="1">Large ribosomal subunit protein bL21</fullName>
    </recommendedName>
    <alternativeName>
        <fullName evidence="2">50S ribosomal protein L21</fullName>
    </alternativeName>
</protein>
<dbReference type="EMBL" id="AJ235273">
    <property type="protein sequence ID" value="CAA15179.1"/>
    <property type="molecule type" value="Genomic_DNA"/>
</dbReference>
<dbReference type="PIR" id="C71635">
    <property type="entry name" value="C71635"/>
</dbReference>
<dbReference type="RefSeq" id="NP_221103.1">
    <property type="nucleotide sequence ID" value="NC_000963.1"/>
</dbReference>
<dbReference type="RefSeq" id="WP_004597000.1">
    <property type="nucleotide sequence ID" value="NC_000963.1"/>
</dbReference>
<dbReference type="SMR" id="Q9ZCI9"/>
<dbReference type="STRING" id="272947.gene:17555821"/>
<dbReference type="EnsemblBacteria" id="CAA15179">
    <property type="protein sequence ID" value="CAA15179"/>
    <property type="gene ID" value="CAA15179"/>
</dbReference>
<dbReference type="GeneID" id="57569873"/>
<dbReference type="KEGG" id="rpr:RP751"/>
<dbReference type="PATRIC" id="fig|272947.5.peg.785"/>
<dbReference type="eggNOG" id="COG0261">
    <property type="taxonomic scope" value="Bacteria"/>
</dbReference>
<dbReference type="HOGENOM" id="CLU_061463_3_2_5"/>
<dbReference type="OrthoDB" id="9813334at2"/>
<dbReference type="Proteomes" id="UP000002480">
    <property type="component" value="Chromosome"/>
</dbReference>
<dbReference type="GO" id="GO:0005737">
    <property type="term" value="C:cytoplasm"/>
    <property type="evidence" value="ECO:0007669"/>
    <property type="project" value="UniProtKB-ARBA"/>
</dbReference>
<dbReference type="GO" id="GO:1990904">
    <property type="term" value="C:ribonucleoprotein complex"/>
    <property type="evidence" value="ECO:0007669"/>
    <property type="project" value="UniProtKB-KW"/>
</dbReference>
<dbReference type="GO" id="GO:0005840">
    <property type="term" value="C:ribosome"/>
    <property type="evidence" value="ECO:0007669"/>
    <property type="project" value="UniProtKB-KW"/>
</dbReference>
<dbReference type="GO" id="GO:0019843">
    <property type="term" value="F:rRNA binding"/>
    <property type="evidence" value="ECO:0007669"/>
    <property type="project" value="UniProtKB-UniRule"/>
</dbReference>
<dbReference type="GO" id="GO:0003735">
    <property type="term" value="F:structural constituent of ribosome"/>
    <property type="evidence" value="ECO:0007669"/>
    <property type="project" value="InterPro"/>
</dbReference>
<dbReference type="GO" id="GO:0006412">
    <property type="term" value="P:translation"/>
    <property type="evidence" value="ECO:0007669"/>
    <property type="project" value="UniProtKB-UniRule"/>
</dbReference>
<dbReference type="HAMAP" id="MF_01363">
    <property type="entry name" value="Ribosomal_bL21"/>
    <property type="match status" value="1"/>
</dbReference>
<dbReference type="InterPro" id="IPR028909">
    <property type="entry name" value="bL21-like"/>
</dbReference>
<dbReference type="InterPro" id="IPR036164">
    <property type="entry name" value="bL21-like_sf"/>
</dbReference>
<dbReference type="InterPro" id="IPR001787">
    <property type="entry name" value="Ribosomal_bL21"/>
</dbReference>
<dbReference type="InterPro" id="IPR018258">
    <property type="entry name" value="Ribosomal_bL21_CS"/>
</dbReference>
<dbReference type="NCBIfam" id="TIGR00061">
    <property type="entry name" value="L21"/>
    <property type="match status" value="1"/>
</dbReference>
<dbReference type="PANTHER" id="PTHR21349">
    <property type="entry name" value="50S RIBOSOMAL PROTEIN L21"/>
    <property type="match status" value="1"/>
</dbReference>
<dbReference type="PANTHER" id="PTHR21349:SF0">
    <property type="entry name" value="LARGE RIBOSOMAL SUBUNIT PROTEIN BL21M"/>
    <property type="match status" value="1"/>
</dbReference>
<dbReference type="Pfam" id="PF00829">
    <property type="entry name" value="Ribosomal_L21p"/>
    <property type="match status" value="1"/>
</dbReference>
<dbReference type="SUPFAM" id="SSF141091">
    <property type="entry name" value="L21p-like"/>
    <property type="match status" value="1"/>
</dbReference>
<dbReference type="PROSITE" id="PS01169">
    <property type="entry name" value="RIBOSOMAL_L21"/>
    <property type="match status" value="1"/>
</dbReference>
<reference key="1">
    <citation type="journal article" date="1998" name="Nature">
        <title>The genome sequence of Rickettsia prowazekii and the origin of mitochondria.</title>
        <authorList>
            <person name="Andersson S.G.E."/>
            <person name="Zomorodipour A."/>
            <person name="Andersson J.O."/>
            <person name="Sicheritz-Ponten T."/>
            <person name="Alsmark U.C.M."/>
            <person name="Podowski R.M."/>
            <person name="Naeslund A.K."/>
            <person name="Eriksson A.-S."/>
            <person name="Winkler H.H."/>
            <person name="Kurland C.G."/>
        </authorList>
    </citation>
    <scope>NUCLEOTIDE SEQUENCE [LARGE SCALE GENOMIC DNA]</scope>
    <source>
        <strain>Madrid E</strain>
    </source>
</reference>
<proteinExistence type="inferred from homology"/>
<name>RL21_RICPR</name>
<organism>
    <name type="scientific">Rickettsia prowazekii (strain Madrid E)</name>
    <dbReference type="NCBI Taxonomy" id="272947"/>
    <lineage>
        <taxon>Bacteria</taxon>
        <taxon>Pseudomonadati</taxon>
        <taxon>Pseudomonadota</taxon>
        <taxon>Alphaproteobacteria</taxon>
        <taxon>Rickettsiales</taxon>
        <taxon>Rickettsiaceae</taxon>
        <taxon>Rickettsieae</taxon>
        <taxon>Rickettsia</taxon>
        <taxon>typhus group</taxon>
    </lineage>
</organism>
<comment type="function">
    <text evidence="1">This protein binds to 23S rRNA in the presence of protein L20.</text>
</comment>
<comment type="subunit">
    <text evidence="1">Part of the 50S ribosomal subunit. Contacts protein L20.</text>
</comment>
<comment type="similarity">
    <text evidence="1">Belongs to the bacterial ribosomal protein bL21 family.</text>
</comment>